<name>REEP5_RAT</name>
<evidence type="ECO:0000250" key="1">
    <source>
        <dbReference type="UniProtKB" id="Q00765"/>
    </source>
</evidence>
<evidence type="ECO:0000250" key="2">
    <source>
        <dbReference type="UniProtKB" id="Q60870"/>
    </source>
</evidence>
<evidence type="ECO:0000255" key="3"/>
<evidence type="ECO:0000269" key="4">
    <source>
    </source>
</evidence>
<evidence type="ECO:0000305" key="5"/>
<proteinExistence type="evidence at protein level"/>
<feature type="chain" id="PRO_0000384816" description="Receptor expression-enhancing protein 5">
    <location>
        <begin position="1"/>
        <end position="189"/>
    </location>
</feature>
<feature type="topological domain" description="Cytoplasmic" evidence="1">
    <location>
        <begin position="1"/>
        <end position="34"/>
    </location>
</feature>
<feature type="transmembrane region" description="Helical" evidence="1">
    <location>
        <begin position="35"/>
        <end position="51"/>
    </location>
</feature>
<feature type="topological domain" description="Lumenal" evidence="1">
    <location>
        <begin position="52"/>
        <end position="53"/>
    </location>
</feature>
<feature type="transmembrane region" description="Helical" evidence="1">
    <location>
        <begin position="54"/>
        <end position="74"/>
    </location>
</feature>
<feature type="topological domain" description="Cytoplasmic" evidence="1">
    <location>
        <begin position="75"/>
        <end position="84"/>
    </location>
</feature>
<feature type="transmembrane region" description="Helical" evidence="1">
    <location>
        <begin position="85"/>
        <end position="103"/>
    </location>
</feature>
<feature type="topological domain" description="Lumenal" evidence="1">
    <location>
        <begin position="104"/>
        <end position="105"/>
    </location>
</feature>
<feature type="transmembrane region" description="Helical" evidence="1">
    <location>
        <begin position="106"/>
        <end position="123"/>
    </location>
</feature>
<feature type="topological domain" description="Cytoplasmic" evidence="1">
    <location>
        <begin position="124"/>
        <end position="189"/>
    </location>
</feature>
<feature type="region of interest" description="Required for dimerization and maintaining endoplasmic reticulum morphology" evidence="1">
    <location>
        <begin position="114"/>
        <end position="185"/>
    </location>
</feature>
<dbReference type="EMBL" id="BC167013">
    <property type="protein sequence ID" value="AAI67013.1"/>
    <property type="molecule type" value="mRNA"/>
</dbReference>
<dbReference type="RefSeq" id="NP_001102358.2">
    <property type="nucleotide sequence ID" value="NM_001108888.2"/>
</dbReference>
<dbReference type="SMR" id="B2RZ37"/>
<dbReference type="FunCoup" id="B2RZ37">
    <property type="interactions" value="947"/>
</dbReference>
<dbReference type="STRING" id="10116.ENSRNOP00000027345"/>
<dbReference type="iPTMnet" id="B2RZ37"/>
<dbReference type="PhosphoSitePlus" id="B2RZ37"/>
<dbReference type="SwissPalm" id="B2RZ37"/>
<dbReference type="jPOST" id="B2RZ37"/>
<dbReference type="PaxDb" id="10116-ENSRNOP00000027345"/>
<dbReference type="PeptideAtlas" id="B2RZ37"/>
<dbReference type="GeneID" id="364838"/>
<dbReference type="KEGG" id="rno:364838"/>
<dbReference type="UCSC" id="RGD:1306047">
    <property type="organism name" value="rat"/>
</dbReference>
<dbReference type="AGR" id="RGD:1306047"/>
<dbReference type="CTD" id="7905"/>
<dbReference type="RGD" id="1306047">
    <property type="gene designation" value="Reep5"/>
</dbReference>
<dbReference type="VEuPathDB" id="HostDB:ENSRNOG00000020167"/>
<dbReference type="eggNOG" id="KOG1725">
    <property type="taxonomic scope" value="Eukaryota"/>
</dbReference>
<dbReference type="HOGENOM" id="CLU_028431_2_0_1"/>
<dbReference type="InParanoid" id="B2RZ37"/>
<dbReference type="OrthoDB" id="41405at9989"/>
<dbReference type="PhylomeDB" id="B2RZ37"/>
<dbReference type="TreeFam" id="TF314913"/>
<dbReference type="PRO" id="PR:B2RZ37"/>
<dbReference type="Proteomes" id="UP000002494">
    <property type="component" value="Chromosome 18"/>
</dbReference>
<dbReference type="Bgee" id="ENSRNOG00000020167">
    <property type="expression patterns" value="Expressed in pancreas and 20 other cell types or tissues"/>
</dbReference>
<dbReference type="GO" id="GO:0005783">
    <property type="term" value="C:endoplasmic reticulum"/>
    <property type="evidence" value="ECO:0000266"/>
    <property type="project" value="RGD"/>
</dbReference>
<dbReference type="GO" id="GO:0071782">
    <property type="term" value="C:endoplasmic reticulum tubular network"/>
    <property type="evidence" value="ECO:0000250"/>
    <property type="project" value="UniProtKB"/>
</dbReference>
<dbReference type="GO" id="GO:0014701">
    <property type="term" value="C:junctional sarcoplasmic reticulum membrane"/>
    <property type="evidence" value="ECO:0000266"/>
    <property type="project" value="RGD"/>
</dbReference>
<dbReference type="GO" id="GO:0033017">
    <property type="term" value="C:sarcoplasmic reticulum membrane"/>
    <property type="evidence" value="ECO:0000266"/>
    <property type="project" value="RGD"/>
</dbReference>
<dbReference type="GO" id="GO:0090158">
    <property type="term" value="P:endoplasmic reticulum membrane organization"/>
    <property type="evidence" value="ECO:0000250"/>
    <property type="project" value="UniProtKB"/>
</dbReference>
<dbReference type="InterPro" id="IPR004345">
    <property type="entry name" value="TB2_DP1_HVA22"/>
</dbReference>
<dbReference type="PANTHER" id="PTHR12300">
    <property type="entry name" value="HVA22-LIKE PROTEINS"/>
    <property type="match status" value="1"/>
</dbReference>
<dbReference type="PANTHER" id="PTHR12300:SF93">
    <property type="entry name" value="RECEPTOR EXPRESSION-ENHANCING PROTEIN 5"/>
    <property type="match status" value="1"/>
</dbReference>
<dbReference type="Pfam" id="PF03134">
    <property type="entry name" value="TB2_DP1_HVA22"/>
    <property type="match status" value="1"/>
</dbReference>
<sequence length="189" mass="21431">MSAAMRERFDRFLHEKNCMTDLLAKLEAKTGVNRSFIALGVIGLVALYLVFGYGASLLCNLIGFGYPAYISMKAIESPNKDDDTQWLTYWVVYGVFSIAEFFSDLFLSWFPFYYMLKCGFLLWCMAPSPSNGAELLYRRVIRPIFLKHESQVDSVVKDVKDKAKETADAISKEVKKATVNLLGDEKKST</sequence>
<organism>
    <name type="scientific">Rattus norvegicus</name>
    <name type="common">Rat</name>
    <dbReference type="NCBI Taxonomy" id="10116"/>
    <lineage>
        <taxon>Eukaryota</taxon>
        <taxon>Metazoa</taxon>
        <taxon>Chordata</taxon>
        <taxon>Craniata</taxon>
        <taxon>Vertebrata</taxon>
        <taxon>Euteleostomi</taxon>
        <taxon>Mammalia</taxon>
        <taxon>Eutheria</taxon>
        <taxon>Euarchontoglires</taxon>
        <taxon>Glires</taxon>
        <taxon>Rodentia</taxon>
        <taxon>Myomorpha</taxon>
        <taxon>Muroidea</taxon>
        <taxon>Muridae</taxon>
        <taxon>Murinae</taxon>
        <taxon>Rattus</taxon>
    </lineage>
</organism>
<keyword id="KW-0256">Endoplasmic reticulum</keyword>
<keyword id="KW-0472">Membrane</keyword>
<keyword id="KW-1185">Reference proteome</keyword>
<keyword id="KW-0703">Sarcoplasmic reticulum</keyword>
<keyword id="KW-0812">Transmembrane</keyword>
<keyword id="KW-1133">Transmembrane helix</keyword>
<accession>B2RZ37</accession>
<comment type="function">
    <text evidence="2">Plays an essential role in heart function and development by regulating the organization and function of the sarcoplasmic reticulum in cardiomyocytes.</text>
</comment>
<comment type="subunit">
    <text evidence="2 4">Monomer (By similarity). Homodimer; maybe disulfide-linked (By similarity). Homotrimer (By similarity). Interacts with ATL1 (PubMed:19665976). Interacts with ATL2 (By similarity). Interacts with ATL3 (By similarity). Interacts with CKAP4 (By similarity). Interacts with RTN4 (isoforms A and B) (By similarity). Interacts with ZFYVE27 (By similarity).</text>
</comment>
<comment type="subcellular location">
    <subcellularLocation>
        <location evidence="2">Endoplasmic reticulum membrane</location>
        <topology evidence="3">Multi-pass membrane protein</topology>
    </subcellularLocation>
    <subcellularLocation>
        <location evidence="2">Sarcoplasmic reticulum membrane</location>
        <topology evidence="3">Multi-pass membrane protein</topology>
    </subcellularLocation>
    <text evidence="2">Localizes to endoplasmic reticulum tubular network. In cardiomyocytes, localizes to the junctional sarcoplasmic reticulum membrane which is closely tethered to the cell membrane and contractile machinery.</text>
</comment>
<comment type="domain">
    <text evidence="1">The short lumenal loops between transmembrane domains 1 and 2 and between transmembrane domains 3 and 4 may impart a wedge-like configuration, thus deforming membranes.</text>
</comment>
<comment type="similarity">
    <text evidence="5">Belongs to the DP1 family.</text>
</comment>
<gene>
    <name type="primary">Reep5</name>
    <name type="synonym">Dp1</name>
</gene>
<reference key="1">
    <citation type="journal article" date="2004" name="Genome Res.">
        <title>The status, quality, and expansion of the NIH full-length cDNA project: the Mammalian Gene Collection (MGC).</title>
        <authorList>
            <consortium name="The MGC Project Team"/>
        </authorList>
    </citation>
    <scope>NUCLEOTIDE SEQUENCE [LARGE SCALE MRNA]</scope>
    <source>
        <tissue>Heart</tissue>
    </source>
</reference>
<reference key="2">
    <citation type="journal article" date="2009" name="Cell">
        <title>A class of dynamin-like GTPases involved in the generation of the tubular ER network.</title>
        <authorList>
            <person name="Hu J."/>
            <person name="Shibata Y."/>
            <person name="Zhu P.-P."/>
            <person name="Voss C."/>
            <person name="Rismanchi N."/>
            <person name="Prinz W.A."/>
            <person name="Rapoport T.A."/>
            <person name="Blackstone C."/>
        </authorList>
    </citation>
    <scope>INTERACTION WITH ATL1</scope>
</reference>
<reference key="3">
    <citation type="journal article" date="2012" name="Nat. Commun.">
        <title>Quantitative maps of protein phosphorylation sites across 14 different rat organs and tissues.</title>
        <authorList>
            <person name="Lundby A."/>
            <person name="Secher A."/>
            <person name="Lage K."/>
            <person name="Nordsborg N.B."/>
            <person name="Dmytriyev A."/>
            <person name="Lundby C."/>
            <person name="Olsen J.V."/>
        </authorList>
    </citation>
    <scope>IDENTIFICATION BY MASS SPECTROMETRY [LARGE SCALE ANALYSIS]</scope>
</reference>
<protein>
    <recommendedName>
        <fullName>Receptor expression-enhancing protein 5</fullName>
    </recommendedName>
    <alternativeName>
        <fullName>Polyposis locus protein 1 homolog</fullName>
    </alternativeName>
</protein>